<dbReference type="EC" id="3.5.2.9" evidence="1"/>
<dbReference type="EMBL" id="CP000526">
    <property type="protein sequence ID" value="ABM51723.1"/>
    <property type="molecule type" value="Genomic_DNA"/>
</dbReference>
<dbReference type="RefSeq" id="WP_004197223.1">
    <property type="nucleotide sequence ID" value="NC_008785.1"/>
</dbReference>
<dbReference type="SMR" id="A1V7S0"/>
<dbReference type="GeneID" id="92980979"/>
<dbReference type="KEGG" id="bmv:BMASAVP1_A2978"/>
<dbReference type="HOGENOM" id="CLU_069535_0_0_4"/>
<dbReference type="GO" id="GO:0017168">
    <property type="term" value="F:5-oxoprolinase (ATP-hydrolyzing) activity"/>
    <property type="evidence" value="ECO:0007669"/>
    <property type="project" value="UniProtKB-UniRule"/>
</dbReference>
<dbReference type="GO" id="GO:0005524">
    <property type="term" value="F:ATP binding"/>
    <property type="evidence" value="ECO:0007669"/>
    <property type="project" value="UniProtKB-UniRule"/>
</dbReference>
<dbReference type="GO" id="GO:0005975">
    <property type="term" value="P:carbohydrate metabolic process"/>
    <property type="evidence" value="ECO:0007669"/>
    <property type="project" value="InterPro"/>
</dbReference>
<dbReference type="CDD" id="cd10800">
    <property type="entry name" value="LamB_YcsF_YbgL_like"/>
    <property type="match status" value="1"/>
</dbReference>
<dbReference type="Gene3D" id="3.20.20.370">
    <property type="entry name" value="Glycoside hydrolase/deacetylase"/>
    <property type="match status" value="1"/>
</dbReference>
<dbReference type="HAMAP" id="MF_00691">
    <property type="entry name" value="PxpA"/>
    <property type="match status" value="1"/>
</dbReference>
<dbReference type="InterPro" id="IPR011330">
    <property type="entry name" value="Glyco_hydro/deAcase_b/a-brl"/>
</dbReference>
<dbReference type="InterPro" id="IPR005501">
    <property type="entry name" value="LamB/YcsF/PxpA-like"/>
</dbReference>
<dbReference type="NCBIfam" id="NF003812">
    <property type="entry name" value="PRK05406.1-1"/>
    <property type="match status" value="1"/>
</dbReference>
<dbReference type="NCBIfam" id="NF003814">
    <property type="entry name" value="PRK05406.1-3"/>
    <property type="match status" value="1"/>
</dbReference>
<dbReference type="NCBIfam" id="NF003815">
    <property type="entry name" value="PRK05406.1-4"/>
    <property type="match status" value="1"/>
</dbReference>
<dbReference type="NCBIfam" id="NF003816">
    <property type="entry name" value="PRK05406.1-5"/>
    <property type="match status" value="1"/>
</dbReference>
<dbReference type="PANTHER" id="PTHR30292:SF0">
    <property type="entry name" value="5-OXOPROLINASE SUBUNIT A"/>
    <property type="match status" value="1"/>
</dbReference>
<dbReference type="PANTHER" id="PTHR30292">
    <property type="entry name" value="UNCHARACTERIZED PROTEIN YBGL-RELATED"/>
    <property type="match status" value="1"/>
</dbReference>
<dbReference type="Pfam" id="PF03746">
    <property type="entry name" value="LamB_YcsF"/>
    <property type="match status" value="1"/>
</dbReference>
<dbReference type="SUPFAM" id="SSF88713">
    <property type="entry name" value="Glycoside hydrolase/deacetylase"/>
    <property type="match status" value="1"/>
</dbReference>
<evidence type="ECO:0000255" key="1">
    <source>
        <dbReference type="HAMAP-Rule" id="MF_00691"/>
    </source>
</evidence>
<protein>
    <recommendedName>
        <fullName evidence="1">5-oxoprolinase subunit A</fullName>
        <shortName evidence="1">5-OPase subunit A</shortName>
        <ecNumber evidence="1">3.5.2.9</ecNumber>
    </recommendedName>
    <alternativeName>
        <fullName evidence="1">5-oxoprolinase (ATP-hydrolyzing) subunit A</fullName>
    </alternativeName>
</protein>
<proteinExistence type="inferred from homology"/>
<name>PXPA_BURMS</name>
<gene>
    <name evidence="1" type="primary">pxpA</name>
    <name type="ordered locus">BMASAVP1_A2978</name>
</gene>
<keyword id="KW-0067">ATP-binding</keyword>
<keyword id="KW-0378">Hydrolase</keyword>
<keyword id="KW-0547">Nucleotide-binding</keyword>
<accession>A1V7S0</accession>
<organism>
    <name type="scientific">Burkholderia mallei (strain SAVP1)</name>
    <dbReference type="NCBI Taxonomy" id="320388"/>
    <lineage>
        <taxon>Bacteria</taxon>
        <taxon>Pseudomonadati</taxon>
        <taxon>Pseudomonadota</taxon>
        <taxon>Betaproteobacteria</taxon>
        <taxon>Burkholderiales</taxon>
        <taxon>Burkholderiaceae</taxon>
        <taxon>Burkholderia</taxon>
        <taxon>pseudomallei group</taxon>
    </lineage>
</organism>
<comment type="function">
    <text evidence="1">Catalyzes the cleavage of 5-oxoproline to form L-glutamate coupled to the hydrolysis of ATP to ADP and inorganic phosphate.</text>
</comment>
<comment type="catalytic activity">
    <reaction evidence="1">
        <text>5-oxo-L-proline + ATP + 2 H2O = L-glutamate + ADP + phosphate + H(+)</text>
        <dbReference type="Rhea" id="RHEA:10348"/>
        <dbReference type="ChEBI" id="CHEBI:15377"/>
        <dbReference type="ChEBI" id="CHEBI:15378"/>
        <dbReference type="ChEBI" id="CHEBI:29985"/>
        <dbReference type="ChEBI" id="CHEBI:30616"/>
        <dbReference type="ChEBI" id="CHEBI:43474"/>
        <dbReference type="ChEBI" id="CHEBI:58402"/>
        <dbReference type="ChEBI" id="CHEBI:456216"/>
        <dbReference type="EC" id="3.5.2.9"/>
    </reaction>
</comment>
<comment type="subunit">
    <text evidence="1">Forms a complex composed of PxpA, PxpB and PxpC.</text>
</comment>
<comment type="similarity">
    <text evidence="1">Belongs to the LamB/PxpA family.</text>
</comment>
<feature type="chain" id="PRO_1000045191" description="5-oxoprolinase subunit A">
    <location>
        <begin position="1"/>
        <end position="254"/>
    </location>
</feature>
<sequence>MEIDLNADLGEGCGSDEALLDLVTSANIACGWHAGGAQAMRDCVRWAVEKGVSIGAHPSFHDPENFGRKEMDLPASEIYAGVLYQLGALSAIAQAEGGRIAHVKPHGALYNQAAREPEIADAVVSAIHDFDPSLAVFGLAKSGFVDAAQQAGLVAVEEVFADRGYRADGSLVPRSQPGALVDDENEMLARTLEMVRGQRVRAVTGEWVPLNAQTVCLHGDGPHALAFAKRIRDALEAAGIDVHAPGALHAGERA</sequence>
<reference key="1">
    <citation type="journal article" date="2010" name="Genome Biol. Evol.">
        <title>Continuing evolution of Burkholderia mallei through genome reduction and large-scale rearrangements.</title>
        <authorList>
            <person name="Losada L."/>
            <person name="Ronning C.M."/>
            <person name="DeShazer D."/>
            <person name="Woods D."/>
            <person name="Fedorova N."/>
            <person name="Kim H.S."/>
            <person name="Shabalina S.A."/>
            <person name="Pearson T.R."/>
            <person name="Brinkac L."/>
            <person name="Tan P."/>
            <person name="Nandi T."/>
            <person name="Crabtree J."/>
            <person name="Badger J."/>
            <person name="Beckstrom-Sternberg S."/>
            <person name="Saqib M."/>
            <person name="Schutzer S.E."/>
            <person name="Keim P."/>
            <person name="Nierman W.C."/>
        </authorList>
    </citation>
    <scope>NUCLEOTIDE SEQUENCE [LARGE SCALE GENOMIC DNA]</scope>
    <source>
        <strain>SAVP1</strain>
    </source>
</reference>